<proteinExistence type="evidence at protein level"/>
<accession>Q52K88</accession>
<accession>Q29PY9</accession>
<dbReference type="EC" id="3.6.1.-"/>
<dbReference type="EMBL" id="AB026648">
    <property type="status" value="NOT_ANNOTATED_CDS"/>
    <property type="molecule type" value="Genomic_DNA"/>
</dbReference>
<dbReference type="EMBL" id="CP002686">
    <property type="protein sequence ID" value="AEE77199.1"/>
    <property type="molecule type" value="Genomic_DNA"/>
</dbReference>
<dbReference type="EMBL" id="CP002686">
    <property type="protein sequence ID" value="AEE77200.1"/>
    <property type="molecule type" value="Genomic_DNA"/>
</dbReference>
<dbReference type="EMBL" id="BT021980">
    <property type="protein sequence ID" value="AAY17417.1"/>
    <property type="molecule type" value="mRNA"/>
</dbReference>
<dbReference type="EMBL" id="BT024767">
    <property type="protein sequence ID" value="ABD59105.1"/>
    <property type="molecule type" value="mRNA"/>
</dbReference>
<dbReference type="RefSeq" id="NP_189303.1">
    <property type="nucleotide sequence ID" value="NM_113580.2"/>
</dbReference>
<dbReference type="RefSeq" id="NP_850636.1">
    <property type="nucleotide sequence ID" value="NM_180305.2"/>
</dbReference>
<dbReference type="SMR" id="Q52K88"/>
<dbReference type="FunCoup" id="Q52K88">
    <property type="interactions" value="1632"/>
</dbReference>
<dbReference type="STRING" id="3702.Q52K88"/>
<dbReference type="PaxDb" id="3702-AT3G26690.2"/>
<dbReference type="ProteomicsDB" id="234942"/>
<dbReference type="EnsemblPlants" id="AT3G26690.1">
    <property type="protein sequence ID" value="AT3G26690.1"/>
    <property type="gene ID" value="AT3G26690"/>
</dbReference>
<dbReference type="EnsemblPlants" id="AT3G26690.2">
    <property type="protein sequence ID" value="AT3G26690.2"/>
    <property type="gene ID" value="AT3G26690"/>
</dbReference>
<dbReference type="GeneID" id="822281"/>
<dbReference type="Gramene" id="AT3G26690.1">
    <property type="protein sequence ID" value="AT3G26690.1"/>
    <property type="gene ID" value="AT3G26690"/>
</dbReference>
<dbReference type="Gramene" id="AT3G26690.2">
    <property type="protein sequence ID" value="AT3G26690.2"/>
    <property type="gene ID" value="AT3G26690"/>
</dbReference>
<dbReference type="KEGG" id="ath:AT3G26690"/>
<dbReference type="Araport" id="AT3G26690"/>
<dbReference type="TAIR" id="AT3G26690">
    <property type="gene designation" value="NUDX13"/>
</dbReference>
<dbReference type="eggNOG" id="KOG2839">
    <property type="taxonomic scope" value="Eukaryota"/>
</dbReference>
<dbReference type="HOGENOM" id="CLU_037162_5_2_1"/>
<dbReference type="InParanoid" id="Q52K88"/>
<dbReference type="OMA" id="DPRYCFV"/>
<dbReference type="OrthoDB" id="2011998at2759"/>
<dbReference type="PhylomeDB" id="Q52K88"/>
<dbReference type="BioCyc" id="ARA:AT3G26690-MONOMER"/>
<dbReference type="BRENDA" id="3.6.1.60">
    <property type="organism ID" value="399"/>
</dbReference>
<dbReference type="PRO" id="PR:Q52K88"/>
<dbReference type="Proteomes" id="UP000006548">
    <property type="component" value="Chromosome 3"/>
</dbReference>
<dbReference type="ExpressionAtlas" id="Q52K88">
    <property type="expression patterns" value="baseline and differential"/>
</dbReference>
<dbReference type="GO" id="GO:0005739">
    <property type="term" value="C:mitochondrion"/>
    <property type="evidence" value="ECO:0000314"/>
    <property type="project" value="TAIR"/>
</dbReference>
<dbReference type="GO" id="GO:0034432">
    <property type="term" value="F:bis(5'-adenosyl)-pentaphosphatase activity"/>
    <property type="evidence" value="ECO:0000314"/>
    <property type="project" value="TAIR"/>
</dbReference>
<dbReference type="GO" id="GO:0016787">
    <property type="term" value="F:hydrolase activity"/>
    <property type="evidence" value="ECO:0000314"/>
    <property type="project" value="TAIR"/>
</dbReference>
<dbReference type="GO" id="GO:0046872">
    <property type="term" value="F:metal ion binding"/>
    <property type="evidence" value="ECO:0007669"/>
    <property type="project" value="UniProtKB-KW"/>
</dbReference>
<dbReference type="CDD" id="cd04666">
    <property type="entry name" value="NUDIX_DIPP2_like_Nudt4"/>
    <property type="match status" value="1"/>
</dbReference>
<dbReference type="FunFam" id="3.90.79.10:FF:000030">
    <property type="entry name" value="Nudix hydrolase 13 mitochondrial"/>
    <property type="match status" value="1"/>
</dbReference>
<dbReference type="Gene3D" id="3.90.79.10">
    <property type="entry name" value="Nucleoside Triphosphate Pyrophosphohydrolase"/>
    <property type="match status" value="1"/>
</dbReference>
<dbReference type="InterPro" id="IPR047198">
    <property type="entry name" value="DDP-like_NUDIX"/>
</dbReference>
<dbReference type="InterPro" id="IPR015797">
    <property type="entry name" value="NUDIX_hydrolase-like_dom_sf"/>
</dbReference>
<dbReference type="InterPro" id="IPR020084">
    <property type="entry name" value="NUDIX_hydrolase_CS"/>
</dbReference>
<dbReference type="InterPro" id="IPR000086">
    <property type="entry name" value="NUDIX_hydrolase_dom"/>
</dbReference>
<dbReference type="PANTHER" id="PTHR12629">
    <property type="entry name" value="DIPHOSPHOINOSITOL POLYPHOSPHATE PHOSPHOHYDROLASE"/>
    <property type="match status" value="1"/>
</dbReference>
<dbReference type="PANTHER" id="PTHR12629:SF76">
    <property type="entry name" value="NUDIX HYDROLASE 13, MITOCHONDRIAL"/>
    <property type="match status" value="1"/>
</dbReference>
<dbReference type="Pfam" id="PF00293">
    <property type="entry name" value="NUDIX"/>
    <property type="match status" value="1"/>
</dbReference>
<dbReference type="SUPFAM" id="SSF55811">
    <property type="entry name" value="Nudix"/>
    <property type="match status" value="1"/>
</dbReference>
<dbReference type="PROSITE" id="PS51462">
    <property type="entry name" value="NUDIX"/>
    <property type="match status" value="1"/>
</dbReference>
<dbReference type="PROSITE" id="PS00893">
    <property type="entry name" value="NUDIX_BOX"/>
    <property type="match status" value="1"/>
</dbReference>
<protein>
    <recommendedName>
        <fullName>Nudix hydrolase 13, mitochondrial</fullName>
        <shortName>AtNUDT13</shortName>
        <ecNumber>3.6.1.-</ecNumber>
    </recommendedName>
</protein>
<keyword id="KW-0378">Hydrolase</keyword>
<keyword id="KW-0460">Magnesium</keyword>
<keyword id="KW-0479">Metal-binding</keyword>
<keyword id="KW-0496">Mitochondrion</keyword>
<keyword id="KW-1185">Reference proteome</keyword>
<keyword id="KW-0809">Transit peptide</keyword>
<evidence type="ECO:0000250" key="1"/>
<evidence type="ECO:0000255" key="2">
    <source>
        <dbReference type="PROSITE-ProRule" id="PRU00794"/>
    </source>
</evidence>
<evidence type="ECO:0000269" key="3">
    <source>
    </source>
</evidence>
<evidence type="ECO:0000269" key="4">
    <source>
    </source>
</evidence>
<evidence type="ECO:0000305" key="5"/>
<comment type="function">
    <text evidence="3">Mediates the hydrolysis of some nucleoside diphosphate derivatives. Can use diadenosine 5',5'''-P(1)P(6) hexaphosphate (Ap(6)A), diadenosine 5',5'''-P(1)P(5) pentaphosphate (Ap(5)A) and adenosine tetraphosphate (p(4)A) as substrates, but not diadenosine 5',5'''-P(1)P(4) tetraphosphate (Ap(4)A), diadenosine 5',5'''-P(1)P(3) triphosphate (Ap(3)A), deoxyribonucleoside triphosphates, ribonucleoside triphosphates, diphosphoinositol pentakisphosphate (PP-InsP(5)) and 5-phospho-alpha-D-ribosyl diphosphate (PRPP).</text>
</comment>
<comment type="cofactor">
    <cofactor>
        <name>Mg(2+)</name>
        <dbReference type="ChEBI" id="CHEBI:18420"/>
    </cofactor>
</comment>
<comment type="activity regulation">
    <text>Inhibited by fluoride.</text>
</comment>
<comment type="biophysicochemical properties">
    <kinetics>
        <KM evidence="3">0.61 mM for diadenosine 5',5'''-P(1)P(6) hexaphosphate</KM>
        <Vmax evidence="3">26.5 umol/min/mg enzyme with diadenosine 5',5'''-P(1)P(6) hexaphosphate as substrate</Vmax>
        <text>Reducing conditions are required for the hydrolytic activity.</text>
    </kinetics>
    <phDependence>
        <text evidence="3">Optimum pH is 8.5.</text>
    </phDependence>
    <temperatureDependence>
        <text evidence="3">Optimum temperature is 37 degrees Celsius.</text>
    </temperatureDependence>
</comment>
<comment type="subunit">
    <text evidence="3">Monomer.</text>
</comment>
<comment type="subcellular location">
    <subcellularLocation>
        <location evidence="3">Mitochondrion</location>
    </subcellularLocation>
</comment>
<comment type="tissue specificity">
    <text evidence="4">Expressed in roots, leaves, stems and inflorescences.</text>
</comment>
<comment type="disruption phenotype">
    <text evidence="4">No visible phenotype under normal growth conditions.</text>
</comment>
<comment type="similarity">
    <text evidence="5">Belongs to the Nudix hydrolase family.</text>
</comment>
<organism>
    <name type="scientific">Arabidopsis thaliana</name>
    <name type="common">Mouse-ear cress</name>
    <dbReference type="NCBI Taxonomy" id="3702"/>
    <lineage>
        <taxon>Eukaryota</taxon>
        <taxon>Viridiplantae</taxon>
        <taxon>Streptophyta</taxon>
        <taxon>Embryophyta</taxon>
        <taxon>Tracheophyta</taxon>
        <taxon>Spermatophyta</taxon>
        <taxon>Magnoliopsida</taxon>
        <taxon>eudicotyledons</taxon>
        <taxon>Gunneridae</taxon>
        <taxon>Pentapetalae</taxon>
        <taxon>rosids</taxon>
        <taxon>malvids</taxon>
        <taxon>Brassicales</taxon>
        <taxon>Brassicaceae</taxon>
        <taxon>Camelineae</taxon>
        <taxon>Arabidopsis</taxon>
    </lineage>
</organism>
<name>NUD13_ARATH</name>
<feature type="transit peptide" description="Mitochondrion">
    <location>
        <begin position="1"/>
        <end status="unknown"/>
    </location>
</feature>
<feature type="chain" id="PRO_0000019956" description="Nudix hydrolase 13, mitochondrial">
    <location>
        <begin status="unknown"/>
        <end position="202"/>
    </location>
</feature>
<feature type="domain" description="Nudix hydrolase" evidence="2">
    <location>
        <begin position="18"/>
        <end position="167"/>
    </location>
</feature>
<feature type="short sequence motif" description="Nudix box">
    <location>
        <begin position="65"/>
        <end position="86"/>
    </location>
</feature>
<feature type="binding site" evidence="1">
    <location>
        <position position="80"/>
    </location>
    <ligand>
        <name>Mg(2+)</name>
        <dbReference type="ChEBI" id="CHEBI:18420"/>
    </ligand>
</feature>
<feature type="binding site" evidence="1">
    <location>
        <position position="84"/>
    </location>
    <ligand>
        <name>Mg(2+)</name>
        <dbReference type="ChEBI" id="CHEBI:18420"/>
    </ligand>
</feature>
<sequence length="202" mass="23187">MSNLSARTGRDHQRYDNNFRLVSGCIPYRLVKDEEEDSTSVDFENKLQVLMISSPNRHDLVFPKGGWEDDETVLEAASREAMEEAGVKGILREDPLGVWEFRSKSSSVEADCCLGGGCKGYMFALEVKEELAIWPEQDDRERRWLNVKEALELCRYEWMQSALEEFLRVMAEEGSTKEDSLAISSISNRGERQIDPRYCFVV</sequence>
<gene>
    <name type="primary">NUDT13</name>
    <name type="synonym">NUDX13</name>
    <name type="ordered locus">At3g26690</name>
    <name type="ORF">MLJ15.8</name>
</gene>
<reference key="1">
    <citation type="journal article" date="2000" name="DNA Res.">
        <title>Structural analysis of Arabidopsis thaliana chromosome 3. I. Sequence features of the regions of 4,504,864 bp covered by sixty P1 and TAC clones.</title>
        <authorList>
            <person name="Sato S."/>
            <person name="Nakamura Y."/>
            <person name="Kaneko T."/>
            <person name="Katoh T."/>
            <person name="Asamizu E."/>
            <person name="Tabata S."/>
        </authorList>
    </citation>
    <scope>NUCLEOTIDE SEQUENCE [LARGE SCALE GENOMIC DNA]</scope>
    <source>
        <strain>cv. Columbia</strain>
    </source>
</reference>
<reference key="2">
    <citation type="journal article" date="2017" name="Plant J.">
        <title>Araport11: a complete reannotation of the Arabidopsis thaliana reference genome.</title>
        <authorList>
            <person name="Cheng C.Y."/>
            <person name="Krishnakumar V."/>
            <person name="Chan A.P."/>
            <person name="Thibaud-Nissen F."/>
            <person name="Schobel S."/>
            <person name="Town C.D."/>
        </authorList>
    </citation>
    <scope>GENOME REANNOTATION</scope>
    <source>
        <strain>cv. Columbia</strain>
    </source>
</reference>
<reference key="3">
    <citation type="submission" date="2006-03" db="EMBL/GenBank/DDBJ databases">
        <title>Arabidopsis cDNA clones.</title>
        <authorList>
            <person name="Shinn P."/>
            <person name="Chen H."/>
            <person name="Cheuk R.F."/>
            <person name="Kim C.J."/>
            <person name="Ecker J.R."/>
        </authorList>
    </citation>
    <scope>NUCLEOTIDE SEQUENCE [LARGE SCALE MRNA]</scope>
    <source>
        <strain>cv. Columbia</strain>
    </source>
</reference>
<reference key="4">
    <citation type="journal article" date="2005" name="J. Biol. Chem.">
        <title>Comprehensive analysis of cytosolic nudix hydrolases in Arabidopsis thaliana.</title>
        <authorList>
            <person name="Ogawa T."/>
            <person name="Ueda Y."/>
            <person name="Yoshimura K."/>
            <person name="Shigeoka S."/>
        </authorList>
    </citation>
    <scope>NOMENCLATURE</scope>
</reference>
<reference key="5">
    <citation type="journal article" date="2007" name="FEBS J.">
        <title>Cloning and characterization of AtNUDT13, a novel mitochondrial Arabidopsis thaliana Nudix hydrolase specific for long-chain diadenosine polyphosphates.</title>
        <authorList>
            <person name="Olejnik K."/>
            <person name="Murcha M.W."/>
            <person name="Whelan J."/>
            <person name="Kraszewska E."/>
        </authorList>
    </citation>
    <scope>FUNCTION</scope>
    <scope>SUBUNIT</scope>
    <scope>SUBCELLULAR LOCATION</scope>
    <scope>BIOPHYSICOCHEMICAL PROPERTIES</scope>
</reference>
<reference key="6">
    <citation type="journal article" date="2008" name="Plant Physiol.">
        <title>Molecular characterization of organelle-type Nudix hydrolases in Arabidopsis.</title>
        <authorList>
            <person name="Ogawa T."/>
            <person name="Yoshimura K."/>
            <person name="Miyake H."/>
            <person name="Ishikawa K."/>
            <person name="Ito D."/>
            <person name="Tanabe N."/>
            <person name="Shigeoka S."/>
        </authorList>
    </citation>
    <scope>TISSUE SPECIFICITY</scope>
    <scope>DISRUPTION PHENOTYPE</scope>
</reference>